<organism>
    <name type="scientific">Arabidopsis thaliana</name>
    <name type="common">Mouse-ear cress</name>
    <dbReference type="NCBI Taxonomy" id="3702"/>
    <lineage>
        <taxon>Eukaryota</taxon>
        <taxon>Viridiplantae</taxon>
        <taxon>Streptophyta</taxon>
        <taxon>Embryophyta</taxon>
        <taxon>Tracheophyta</taxon>
        <taxon>Spermatophyta</taxon>
        <taxon>Magnoliopsida</taxon>
        <taxon>eudicotyledons</taxon>
        <taxon>Gunneridae</taxon>
        <taxon>Pentapetalae</taxon>
        <taxon>rosids</taxon>
        <taxon>malvids</taxon>
        <taxon>Brassicales</taxon>
        <taxon>Brassicaceae</taxon>
        <taxon>Camelineae</taxon>
        <taxon>Arabidopsis</taxon>
    </lineage>
</organism>
<comment type="function">
    <text evidence="4 9">Water channel required to facilitate the transport of water across cell membrane. May be involved in the osmoregulation in plants under high osmotic stress such as under a high salt condition.</text>
</comment>
<comment type="subunit">
    <text evidence="8">Interacts with SYP61 and SYP121 in trafficking vesicles and at the plasma membrane.</text>
</comment>
<comment type="interaction">
    <interactant intactId="EBI-4434233">
        <id>P93004</id>
    </interactant>
    <interactant intactId="EBI-4440607">
        <id>Q8LAA6</id>
        <label>PIP1-5</label>
    </interactant>
    <organismsDiffer>false</organismsDiffer>
    <experiments>3</experiments>
</comment>
<comment type="interaction">
    <interactant intactId="EBI-4434233">
        <id>P93004</id>
    </interactant>
    <interactant intactId="EBI-4427223">
        <id>Q39196</id>
        <label>PIP1.4</label>
    </interactant>
    <organismsDiffer>false</organismsDiffer>
    <experiments>3</experiments>
</comment>
<comment type="interaction">
    <interactant intactId="EBI-4434233">
        <id>P93004</id>
    </interactant>
    <interactant intactId="EBI-2010972">
        <id>Q8VZ95</id>
        <label>PVA11</label>
    </interactant>
    <organismsDiffer>false</organismsDiffer>
    <experiments>3</experiments>
</comment>
<comment type="subcellular location">
    <subcellularLocation>
        <location evidence="5 7 8">Cell membrane</location>
        <topology evidence="5">Multi-pass membrane protein</topology>
    </subcellularLocation>
    <text evidence="8">Trafficking from the post-Golgi compartment to the plasma membrane is mediated by the SNARE proteins SYP61 and SYP121.</text>
</comment>
<comment type="tissue specificity">
    <text evidence="4 6 8">Highly expressed in flowers, expressed at low levels in siliques, and at low level in leaves and roots (PubMed:10102577, PubMed:11806824). Highly levels in elongating cells in both roots and shoots (PubMed:25082856).</text>
</comment>
<comment type="induction">
    <text evidence="4">By NaCl and abscisic acid (ABA) treatments.</text>
</comment>
<comment type="domain">
    <text>Aquaporins contain two tandem repeats each containing three membrane-spanning domains and a pore-forming loop with the signature motif Asn-Pro-Ala (NPA).</text>
</comment>
<comment type="similarity">
    <text evidence="13">Belongs to the MIP/aquaporin (TC 1.A.8) family. PIP (TC 1.A.8.11) subfamily.</text>
</comment>
<evidence type="ECO:0000250" key="1">
    <source>
        <dbReference type="UniProtKB" id="P43286"/>
    </source>
</evidence>
<evidence type="ECO:0000250" key="2">
    <source>
        <dbReference type="UniProtKB" id="P61837"/>
    </source>
</evidence>
<evidence type="ECO:0000255" key="3"/>
<evidence type="ECO:0000269" key="4">
    <source>
    </source>
</evidence>
<evidence type="ECO:0000269" key="5">
    <source>
    </source>
</evidence>
<evidence type="ECO:0000269" key="6">
    <source>
    </source>
</evidence>
<evidence type="ECO:0000269" key="7">
    <source>
    </source>
</evidence>
<evidence type="ECO:0000269" key="8">
    <source>
    </source>
</evidence>
<evidence type="ECO:0000269" key="9">
    <source>
    </source>
</evidence>
<evidence type="ECO:0000303" key="10">
    <source>
    </source>
</evidence>
<evidence type="ECO:0000303" key="11">
    <source>
    </source>
</evidence>
<evidence type="ECO:0000303" key="12">
    <source>
    </source>
</evidence>
<evidence type="ECO:0000305" key="13"/>
<evidence type="ECO:0000312" key="14">
    <source>
        <dbReference type="Araport" id="AT4G35100"/>
    </source>
</evidence>
<evidence type="ECO:0000312" key="15">
    <source>
        <dbReference type="EMBL" id="CAA17774.1"/>
    </source>
</evidence>
<evidence type="ECO:0007744" key="16">
    <source>
    </source>
</evidence>
<evidence type="ECO:0007744" key="17">
    <source>
    </source>
</evidence>
<feature type="chain" id="PRO_0000064057" description="Aquaporin PIP2-7">
    <location>
        <begin position="1"/>
        <end position="280"/>
    </location>
</feature>
<feature type="topological domain" description="Cytoplasmic" evidence="3">
    <location>
        <begin position="1"/>
        <end position="38"/>
    </location>
</feature>
<feature type="transmembrane region" description="Helical; Name=1" evidence="3">
    <location>
        <begin position="39"/>
        <end position="59"/>
    </location>
</feature>
<feature type="topological domain" description="Extracellular" evidence="3">
    <location>
        <begin position="60"/>
        <end position="69"/>
    </location>
</feature>
<feature type="transmembrane region" description="Helical; Name=2" evidence="3">
    <location>
        <begin position="70"/>
        <end position="90"/>
    </location>
</feature>
<feature type="topological domain" description="Cytoplasmic" evidence="3">
    <location>
        <begin position="91"/>
        <end position="118"/>
    </location>
</feature>
<feature type="transmembrane region" description="Helical; Name=3" evidence="3">
    <location>
        <begin position="119"/>
        <end position="139"/>
    </location>
</feature>
<feature type="topological domain" description="Extracellular" evidence="3">
    <location>
        <begin position="140"/>
        <end position="160"/>
    </location>
</feature>
<feature type="transmembrane region" description="Helical; Name=4" evidence="3">
    <location>
        <begin position="161"/>
        <end position="181"/>
    </location>
</feature>
<feature type="topological domain" description="Cytoplasmic" evidence="3">
    <location>
        <begin position="182"/>
        <end position="192"/>
    </location>
</feature>
<feature type="transmembrane region" description="Helical; Name=5" evidence="3">
    <location>
        <begin position="193"/>
        <end position="213"/>
    </location>
</feature>
<feature type="topological domain" description="Extracellular" evidence="3">
    <location>
        <begin position="214"/>
        <end position="242"/>
    </location>
</feature>
<feature type="transmembrane region" description="Helical; Name=6" evidence="3">
    <location>
        <begin position="243"/>
        <end position="263"/>
    </location>
</feature>
<feature type="topological domain" description="Cytoplasmic" evidence="3">
    <location>
        <begin position="264"/>
        <end position="280"/>
    </location>
</feature>
<feature type="short sequence motif" description="NPA 1">
    <location>
        <begin position="100"/>
        <end position="102"/>
    </location>
</feature>
<feature type="short sequence motif" description="NPA 2">
    <location>
        <begin position="221"/>
        <end position="223"/>
    </location>
</feature>
<feature type="modified residue" description="N-acetylmethionine" evidence="2">
    <location>
        <position position="1"/>
    </location>
</feature>
<feature type="modified residue" description="N6,N6-dimethyllysine" evidence="1">
    <location>
        <position position="3"/>
    </location>
</feature>
<feature type="modified residue" description="Phosphoserine" evidence="16 17">
    <location>
        <position position="273"/>
    </location>
</feature>
<feature type="modified residue" description="Phosphoserine" evidence="16 17">
    <location>
        <position position="276"/>
    </location>
</feature>
<feature type="modified residue" description="Phosphothreonine" evidence="17">
    <location>
        <position position="279"/>
    </location>
</feature>
<feature type="sequence conflict" description="In Ref. 1; AAB36949." evidence="13" ref="1">
    <original>Y</original>
    <variation>I</variation>
    <location>
        <position position="52"/>
    </location>
</feature>
<feature type="sequence conflict" description="In Ref. 2; AAB65787." evidence="13" ref="2">
    <original>G</original>
    <variation>R</variation>
    <location>
        <position position="106"/>
    </location>
</feature>
<feature type="sequence conflict" description="In Ref. 1; AAB36949 and 2; AAB65787." evidence="13" ref="1 2">
    <original>R</original>
    <variation>G</variation>
    <location>
        <position position="111"/>
    </location>
</feature>
<proteinExistence type="evidence at protein level"/>
<sequence>MSKEVSEEGKTHHGKDYVDPPPAPLLDMGELKSWSFYRALIAEFIATLLFLYVTVATVIGHKKQTGPCDGVGLLGIAWAFGGMIFVLVYCTAGISGGHINPAVTFGLFLARKVSLVRALGYMIAQCLGAICGVGFVKAFMKTPYNTLGGGANTVADGYSKGTALGAEIIGTFVLVYTVFSATDPKRSARDSHIPVLAPLPIGFAVFMVHLATIPITGTGINPARSFGAAVIYNNEKAWDDQWIFWVGPFLGALAAAAYHQYILRASAIKALGSFRSNATN</sequence>
<protein>
    <recommendedName>
        <fullName evidence="11">Aquaporin PIP2-7</fullName>
    </recommendedName>
    <alternativeName>
        <fullName evidence="11">Plasma membrane intrinsic protein 2-7</fullName>
        <shortName evidence="11">AtPIP2;7</shortName>
    </alternativeName>
    <alternativeName>
        <fullName evidence="12">Plasma membrane intrinsic protein 3</fullName>
        <shortName evidence="12">At-PIP3</shortName>
    </alternativeName>
    <alternativeName>
        <fullName evidence="10">Salt stress-induced major intrinsic protein</fullName>
    </alternativeName>
</protein>
<name>PIP27_ARATH</name>
<reference key="1">
    <citation type="journal article" date="1997" name="Plant Physiol.">
        <title>The major intrinsic protein family of Arabidopsis has 23 members that form three distinct groups with functional aquaporins in each group.</title>
        <authorList>
            <person name="Weig A.R."/>
            <person name="Deswarte C."/>
            <person name="Chrispeels M.J."/>
        </authorList>
    </citation>
    <scope>NUCLEOTIDE SEQUENCE [MRNA]</scope>
    <scope>FUNCTION</scope>
    <source>
        <strain>cv. Columbia</strain>
    </source>
</reference>
<reference key="2">
    <citation type="journal article" date="1999" name="Mol. Cells">
        <title>Characterization of two new channel protein genes in Arabidopsis.</title>
        <authorList>
            <person name="Pih K.T."/>
            <person name="Kabilan V."/>
            <person name="Lim J.H."/>
            <person name="Kang S.G."/>
            <person name="Piao H.L."/>
            <person name="Jin J.B."/>
            <person name="Hwang I."/>
        </authorList>
    </citation>
    <scope>NUCLEOTIDE SEQUENCE [MRNA]</scope>
    <scope>FUNCTION</scope>
    <scope>TISSUE SPECIFICITY</scope>
    <scope>INDUCTION</scope>
    <source>
        <strain>cv. Columbia</strain>
    </source>
</reference>
<reference key="3">
    <citation type="journal article" date="1999" name="Nature">
        <title>Sequence and analysis of chromosome 4 of the plant Arabidopsis thaliana.</title>
        <authorList>
            <person name="Mayer K.F.X."/>
            <person name="Schueller C."/>
            <person name="Wambutt R."/>
            <person name="Murphy G."/>
            <person name="Volckaert G."/>
            <person name="Pohl T."/>
            <person name="Duesterhoeft A."/>
            <person name="Stiekema W."/>
            <person name="Entian K.-D."/>
            <person name="Terryn N."/>
            <person name="Harris B."/>
            <person name="Ansorge W."/>
            <person name="Brandt P."/>
            <person name="Grivell L.A."/>
            <person name="Rieger M."/>
            <person name="Weichselgartner M."/>
            <person name="de Simone V."/>
            <person name="Obermaier B."/>
            <person name="Mache R."/>
            <person name="Mueller M."/>
            <person name="Kreis M."/>
            <person name="Delseny M."/>
            <person name="Puigdomenech P."/>
            <person name="Watson M."/>
            <person name="Schmidtheini T."/>
            <person name="Reichert B."/>
            <person name="Portetelle D."/>
            <person name="Perez-Alonso M."/>
            <person name="Boutry M."/>
            <person name="Bancroft I."/>
            <person name="Vos P."/>
            <person name="Hoheisel J."/>
            <person name="Zimmermann W."/>
            <person name="Wedler H."/>
            <person name="Ridley P."/>
            <person name="Langham S.-A."/>
            <person name="McCullagh B."/>
            <person name="Bilham L."/>
            <person name="Robben J."/>
            <person name="van der Schueren J."/>
            <person name="Grymonprez B."/>
            <person name="Chuang Y.-J."/>
            <person name="Vandenbussche F."/>
            <person name="Braeken M."/>
            <person name="Weltjens I."/>
            <person name="Voet M."/>
            <person name="Bastiaens I."/>
            <person name="Aert R."/>
            <person name="Defoor E."/>
            <person name="Weitzenegger T."/>
            <person name="Bothe G."/>
            <person name="Ramsperger U."/>
            <person name="Hilbert H."/>
            <person name="Braun M."/>
            <person name="Holzer E."/>
            <person name="Brandt A."/>
            <person name="Peters S."/>
            <person name="van Staveren M."/>
            <person name="Dirkse W."/>
            <person name="Mooijman P."/>
            <person name="Klein Lankhorst R."/>
            <person name="Rose M."/>
            <person name="Hauf J."/>
            <person name="Koetter P."/>
            <person name="Berneiser S."/>
            <person name="Hempel S."/>
            <person name="Feldpausch M."/>
            <person name="Lamberth S."/>
            <person name="Van den Daele H."/>
            <person name="De Keyser A."/>
            <person name="Buysshaert C."/>
            <person name="Gielen J."/>
            <person name="Villarroel R."/>
            <person name="De Clercq R."/>
            <person name="van Montagu M."/>
            <person name="Rogers J."/>
            <person name="Cronin A."/>
            <person name="Quail M.A."/>
            <person name="Bray-Allen S."/>
            <person name="Clark L."/>
            <person name="Doggett J."/>
            <person name="Hall S."/>
            <person name="Kay M."/>
            <person name="Lennard N."/>
            <person name="McLay K."/>
            <person name="Mayes R."/>
            <person name="Pettett A."/>
            <person name="Rajandream M.A."/>
            <person name="Lyne M."/>
            <person name="Benes V."/>
            <person name="Rechmann S."/>
            <person name="Borkova D."/>
            <person name="Bloecker H."/>
            <person name="Scharfe M."/>
            <person name="Grimm M."/>
            <person name="Loehnert T.-H."/>
            <person name="Dose S."/>
            <person name="de Haan M."/>
            <person name="Maarse A.C."/>
            <person name="Schaefer M."/>
            <person name="Mueller-Auer S."/>
            <person name="Gabel C."/>
            <person name="Fuchs M."/>
            <person name="Fartmann B."/>
            <person name="Granderath K."/>
            <person name="Dauner D."/>
            <person name="Herzl A."/>
            <person name="Neumann S."/>
            <person name="Argiriou A."/>
            <person name="Vitale D."/>
            <person name="Liguori R."/>
            <person name="Piravandi E."/>
            <person name="Massenet O."/>
            <person name="Quigley F."/>
            <person name="Clabauld G."/>
            <person name="Muendlein A."/>
            <person name="Felber R."/>
            <person name="Schnabl S."/>
            <person name="Hiller R."/>
            <person name="Schmidt W."/>
            <person name="Lecharny A."/>
            <person name="Aubourg S."/>
            <person name="Chefdor F."/>
            <person name="Cooke R."/>
            <person name="Berger C."/>
            <person name="Monfort A."/>
            <person name="Casacuberta E."/>
            <person name="Gibbons T."/>
            <person name="Weber N."/>
            <person name="Vandenbol M."/>
            <person name="Bargues M."/>
            <person name="Terol J."/>
            <person name="Torres A."/>
            <person name="Perez-Perez A."/>
            <person name="Purnelle B."/>
            <person name="Bent E."/>
            <person name="Johnson S."/>
            <person name="Tacon D."/>
            <person name="Jesse T."/>
            <person name="Heijnen L."/>
            <person name="Schwarz S."/>
            <person name="Scholler P."/>
            <person name="Heber S."/>
            <person name="Francs P."/>
            <person name="Bielke C."/>
            <person name="Frishman D."/>
            <person name="Haase D."/>
            <person name="Lemcke K."/>
            <person name="Mewes H.-W."/>
            <person name="Stocker S."/>
            <person name="Zaccaria P."/>
            <person name="Bevan M."/>
            <person name="Wilson R.K."/>
            <person name="de la Bastide M."/>
            <person name="Habermann K."/>
            <person name="Parnell L."/>
            <person name="Dedhia N."/>
            <person name="Gnoj L."/>
            <person name="Schutz K."/>
            <person name="Huang E."/>
            <person name="Spiegel L."/>
            <person name="Sekhon M."/>
            <person name="Murray J."/>
            <person name="Sheet P."/>
            <person name="Cordes M."/>
            <person name="Abu-Threideh J."/>
            <person name="Stoneking T."/>
            <person name="Kalicki J."/>
            <person name="Graves T."/>
            <person name="Harmon G."/>
            <person name="Edwards J."/>
            <person name="Latreille P."/>
            <person name="Courtney L."/>
            <person name="Cloud J."/>
            <person name="Abbott A."/>
            <person name="Scott K."/>
            <person name="Johnson D."/>
            <person name="Minx P."/>
            <person name="Bentley D."/>
            <person name="Fulton B."/>
            <person name="Miller N."/>
            <person name="Greco T."/>
            <person name="Kemp K."/>
            <person name="Kramer J."/>
            <person name="Fulton L."/>
            <person name="Mardis E."/>
            <person name="Dante M."/>
            <person name="Pepin K."/>
            <person name="Hillier L.W."/>
            <person name="Nelson J."/>
            <person name="Spieth J."/>
            <person name="Ryan E."/>
            <person name="Andrews S."/>
            <person name="Geisel C."/>
            <person name="Layman D."/>
            <person name="Du H."/>
            <person name="Ali J."/>
            <person name="Berghoff A."/>
            <person name="Jones K."/>
            <person name="Drone K."/>
            <person name="Cotton M."/>
            <person name="Joshu C."/>
            <person name="Antonoiu B."/>
            <person name="Zidanic M."/>
            <person name="Strong C."/>
            <person name="Sun H."/>
            <person name="Lamar B."/>
            <person name="Yordan C."/>
            <person name="Ma P."/>
            <person name="Zhong J."/>
            <person name="Preston R."/>
            <person name="Vil D."/>
            <person name="Shekher M."/>
            <person name="Matero A."/>
            <person name="Shah R."/>
            <person name="Swaby I.K."/>
            <person name="O'Shaughnessy A."/>
            <person name="Rodriguez M."/>
            <person name="Hoffman J."/>
            <person name="Till S."/>
            <person name="Granat S."/>
            <person name="Shohdy N."/>
            <person name="Hasegawa A."/>
            <person name="Hameed A."/>
            <person name="Lodhi M."/>
            <person name="Johnson A."/>
            <person name="Chen E."/>
            <person name="Marra M.A."/>
            <person name="Martienssen R."/>
            <person name="McCombie W.R."/>
        </authorList>
    </citation>
    <scope>NUCLEOTIDE SEQUENCE [LARGE SCALE GENOMIC DNA]</scope>
    <source>
        <strain>cv. Columbia</strain>
    </source>
</reference>
<reference key="4">
    <citation type="journal article" date="2017" name="Plant J.">
        <title>Araport11: a complete reannotation of the Arabidopsis thaliana reference genome.</title>
        <authorList>
            <person name="Cheng C.Y."/>
            <person name="Krishnakumar V."/>
            <person name="Chan A.P."/>
            <person name="Thibaud-Nissen F."/>
            <person name="Schobel S."/>
            <person name="Town C.D."/>
        </authorList>
    </citation>
    <scope>GENOME REANNOTATION</scope>
    <source>
        <strain>cv. Columbia</strain>
    </source>
</reference>
<reference key="5">
    <citation type="journal article" date="2003" name="Science">
        <title>Empirical analysis of transcriptional activity in the Arabidopsis genome.</title>
        <authorList>
            <person name="Yamada K."/>
            <person name="Lim J."/>
            <person name="Dale J.M."/>
            <person name="Chen H."/>
            <person name="Shinn P."/>
            <person name="Palm C.J."/>
            <person name="Southwick A.M."/>
            <person name="Wu H.C."/>
            <person name="Kim C.J."/>
            <person name="Nguyen M."/>
            <person name="Pham P.K."/>
            <person name="Cheuk R.F."/>
            <person name="Karlin-Newmann G."/>
            <person name="Liu S.X."/>
            <person name="Lam B."/>
            <person name="Sakano H."/>
            <person name="Wu T."/>
            <person name="Yu G."/>
            <person name="Miranda M."/>
            <person name="Quach H.L."/>
            <person name="Tripp M."/>
            <person name="Chang C.H."/>
            <person name="Lee J.M."/>
            <person name="Toriumi M.J."/>
            <person name="Chan M.M."/>
            <person name="Tang C.C."/>
            <person name="Onodera C.S."/>
            <person name="Deng J.M."/>
            <person name="Akiyama K."/>
            <person name="Ansari Y."/>
            <person name="Arakawa T."/>
            <person name="Banh J."/>
            <person name="Banno F."/>
            <person name="Bowser L."/>
            <person name="Brooks S.Y."/>
            <person name="Carninci P."/>
            <person name="Chao Q."/>
            <person name="Choy N."/>
            <person name="Enju A."/>
            <person name="Goldsmith A.D."/>
            <person name="Gurjal M."/>
            <person name="Hansen N.F."/>
            <person name="Hayashizaki Y."/>
            <person name="Johnson-Hopson C."/>
            <person name="Hsuan V.W."/>
            <person name="Iida K."/>
            <person name="Karnes M."/>
            <person name="Khan S."/>
            <person name="Koesema E."/>
            <person name="Ishida J."/>
            <person name="Jiang P.X."/>
            <person name="Jones T."/>
            <person name="Kawai J."/>
            <person name="Kamiya A."/>
            <person name="Meyers C."/>
            <person name="Nakajima M."/>
            <person name="Narusaka M."/>
            <person name="Seki M."/>
            <person name="Sakurai T."/>
            <person name="Satou M."/>
            <person name="Tamse R."/>
            <person name="Vaysberg M."/>
            <person name="Wallender E.K."/>
            <person name="Wong C."/>
            <person name="Yamamura Y."/>
            <person name="Yuan S."/>
            <person name="Shinozaki K."/>
            <person name="Davis R.W."/>
            <person name="Theologis A."/>
            <person name="Ecker J.R."/>
        </authorList>
    </citation>
    <scope>NUCLEOTIDE SEQUENCE [LARGE SCALE MRNA]</scope>
    <source>
        <strain>cv. Columbia</strain>
    </source>
</reference>
<reference key="6">
    <citation type="submission" date="2002-03" db="EMBL/GenBank/DDBJ databases">
        <title>Full-length cDNA from Arabidopsis thaliana.</title>
        <authorList>
            <person name="Brover V.V."/>
            <person name="Troukhan M.E."/>
            <person name="Alexandrov N.A."/>
            <person name="Lu Y.-P."/>
            <person name="Flavell R.B."/>
            <person name="Feldmann K.A."/>
        </authorList>
    </citation>
    <scope>NUCLEOTIDE SEQUENCE [LARGE SCALE MRNA]</scope>
</reference>
<reference key="7">
    <citation type="journal article" date="2000" name="Proc. Natl. Acad. Sci. U.S.A.">
        <title>Random GFP::cDNA fusions enable visualization of subcellular structures in cells of Arabidopsis at a high frequency.</title>
        <authorList>
            <person name="Cutler S.R."/>
            <person name="Ehrhardt D.W."/>
            <person name="Griffitts J.S."/>
            <person name="Somerville C.R."/>
        </authorList>
    </citation>
    <scope>SUBCELLULAR LOCATION</scope>
</reference>
<reference key="8">
    <citation type="journal article" date="2002" name="Genome Biol.">
        <title>From genome to function: the Arabidopsis aquaporins.</title>
        <authorList>
            <person name="Quigley F."/>
            <person name="Rosenberg J.M."/>
            <person name="Shachar-Hill Y."/>
            <person name="Bohnert H.J."/>
        </authorList>
    </citation>
    <scope>NOMENCLATURE</scope>
    <scope>TISSUE SPECIFICITY</scope>
</reference>
<reference key="9">
    <citation type="journal article" date="2004" name="Mol. Cell. Proteomics">
        <title>Identification of new intrinsic proteins in Arabidopsis plasma membrane proteome.</title>
        <authorList>
            <person name="Marmagne A."/>
            <person name="Rouet M.-A."/>
            <person name="Ferro M."/>
            <person name="Rolland N."/>
            <person name="Alcon C."/>
            <person name="Joyard J."/>
            <person name="Garin J."/>
            <person name="Barbier-Brygoo H."/>
            <person name="Ephritikhine G."/>
        </authorList>
    </citation>
    <scope>IDENTIFICATION BY MASS SPECTROMETRY</scope>
    <scope>SUBCELLULAR LOCATION [LARGE SCALE ANALYSIS]</scope>
</reference>
<reference key="10">
    <citation type="journal article" date="2008" name="J. Proteome Res.">
        <title>Site-specific phosphorylation profiling of Arabidopsis proteins by mass spectrometry and peptide chip analysis.</title>
        <authorList>
            <person name="de la Fuente van Bentem S."/>
            <person name="Anrather D."/>
            <person name="Dohnal I."/>
            <person name="Roitinger E."/>
            <person name="Csaszar E."/>
            <person name="Joore J."/>
            <person name="Buijnink J."/>
            <person name="Carreri A."/>
            <person name="Forzani C."/>
            <person name="Lorkovic Z.J."/>
            <person name="Barta A."/>
            <person name="Lecourieux D."/>
            <person name="Verhounig A."/>
            <person name="Jonak C."/>
            <person name="Hirt H."/>
        </authorList>
    </citation>
    <scope>PHOSPHORYLATION [LARGE SCALE ANALYSIS] AT SER-273 AND SER-276</scope>
    <scope>IDENTIFICATION BY MASS SPECTROMETRY [LARGE SCALE ANALYSIS]</scope>
    <source>
        <tissue>Root</tissue>
    </source>
</reference>
<reference key="11">
    <citation type="journal article" date="2009" name="Plant Physiol.">
        <title>Large-scale Arabidopsis phosphoproteome profiling reveals novel chloroplast kinase substrates and phosphorylation networks.</title>
        <authorList>
            <person name="Reiland S."/>
            <person name="Messerli G."/>
            <person name="Baerenfaller K."/>
            <person name="Gerrits B."/>
            <person name="Endler A."/>
            <person name="Grossmann J."/>
            <person name="Gruissem W."/>
            <person name="Baginsky S."/>
        </authorList>
    </citation>
    <scope>PHOSPHORYLATION [LARGE SCALE ANALYSIS] AT SER-273; SER-276 AND THR-279</scope>
    <scope>IDENTIFICATION BY MASS SPECTROMETRY [LARGE SCALE ANALYSIS]</scope>
</reference>
<reference key="12">
    <citation type="journal article" date="2014" name="Plant Cell">
        <title>Arabidopsis SNAREs SYP61 and SYP121 coordinate the trafficking of plasma membrane aquaporin PIP2;7 to modulate the cell membrane water permeability.</title>
        <authorList>
            <person name="Hachez C."/>
            <person name="Laloux T."/>
            <person name="Reinhardt H."/>
            <person name="Cavez D."/>
            <person name="Degand H."/>
            <person name="Grefen C."/>
            <person name="De Rycke R."/>
            <person name="Inze D."/>
            <person name="Blatt M.R."/>
            <person name="Russinova E."/>
            <person name="Chaumont F."/>
        </authorList>
    </citation>
    <scope>INTERACTION WITH SYP61 AND SYP121</scope>
    <scope>SUBCELLULAR LOCATION</scope>
    <scope>TISSUE SPECIFICITY</scope>
    <scope>SUBUNIT</scope>
</reference>
<keyword id="KW-0007">Acetylation</keyword>
<keyword id="KW-1003">Cell membrane</keyword>
<keyword id="KW-0472">Membrane</keyword>
<keyword id="KW-0488">Methylation</keyword>
<keyword id="KW-0597">Phosphoprotein</keyword>
<keyword id="KW-1185">Reference proteome</keyword>
<keyword id="KW-0677">Repeat</keyword>
<keyword id="KW-0812">Transmembrane</keyword>
<keyword id="KW-1133">Transmembrane helix</keyword>
<keyword id="KW-0813">Transport</keyword>
<accession>P93004</accession>
<accession>O22332</accession>
<accession>O49616</accession>
<gene>
    <name evidence="11" type="primary">PIP2-7</name>
    <name evidence="12" type="synonym">PIP3</name>
    <name evidence="10" type="synonym">SIMIP</name>
    <name evidence="14" type="ordered locus">At4g35100</name>
    <name evidence="15" type="ORF">M4E13.150</name>
</gene>
<dbReference type="EMBL" id="U78297">
    <property type="protein sequence ID" value="AAB36949.1"/>
    <property type="molecule type" value="mRNA"/>
</dbReference>
<dbReference type="EMBL" id="AF003728">
    <property type="protein sequence ID" value="AAB65787.1"/>
    <property type="molecule type" value="mRNA"/>
</dbReference>
<dbReference type="EMBL" id="AL022023">
    <property type="protein sequence ID" value="CAA17774.1"/>
    <property type="molecule type" value="Genomic_DNA"/>
</dbReference>
<dbReference type="EMBL" id="AL161586">
    <property type="protein sequence ID" value="CAB80227.1"/>
    <property type="molecule type" value="Genomic_DNA"/>
</dbReference>
<dbReference type="EMBL" id="CP002687">
    <property type="protein sequence ID" value="AEE86464.1"/>
    <property type="molecule type" value="Genomic_DNA"/>
</dbReference>
<dbReference type="EMBL" id="CP002687">
    <property type="protein sequence ID" value="AEE86465.1"/>
    <property type="molecule type" value="Genomic_DNA"/>
</dbReference>
<dbReference type="EMBL" id="AF412110">
    <property type="protein sequence ID" value="AAL06563.1"/>
    <property type="molecule type" value="mRNA"/>
</dbReference>
<dbReference type="EMBL" id="AY062803">
    <property type="protein sequence ID" value="AAL32881.1"/>
    <property type="molecule type" value="mRNA"/>
</dbReference>
<dbReference type="EMBL" id="AY081580">
    <property type="protein sequence ID" value="AAM10142.1"/>
    <property type="molecule type" value="mRNA"/>
</dbReference>
<dbReference type="EMBL" id="AY088485">
    <property type="protein sequence ID" value="AAM66021.1"/>
    <property type="molecule type" value="mRNA"/>
</dbReference>
<dbReference type="PIR" id="T05780">
    <property type="entry name" value="T05780"/>
</dbReference>
<dbReference type="RefSeq" id="NP_001190920.1">
    <property type="nucleotide sequence ID" value="NM_001203991.1"/>
</dbReference>
<dbReference type="RefSeq" id="NP_195236.1">
    <property type="nucleotide sequence ID" value="NM_119676.4"/>
</dbReference>
<dbReference type="SMR" id="P93004"/>
<dbReference type="BioGRID" id="14944">
    <property type="interactions" value="49"/>
</dbReference>
<dbReference type="FunCoup" id="P93004">
    <property type="interactions" value="357"/>
</dbReference>
<dbReference type="IntAct" id="P93004">
    <property type="interactions" value="39"/>
</dbReference>
<dbReference type="STRING" id="3702.P93004"/>
<dbReference type="iPTMnet" id="P93004"/>
<dbReference type="SwissPalm" id="P93004"/>
<dbReference type="PaxDb" id="3702-AT4G35100.2"/>
<dbReference type="ProteomicsDB" id="234761"/>
<dbReference type="EnsemblPlants" id="AT4G35100.1">
    <property type="protein sequence ID" value="AT4G35100.1"/>
    <property type="gene ID" value="AT4G35100"/>
</dbReference>
<dbReference type="EnsemblPlants" id="AT4G35100.2">
    <property type="protein sequence ID" value="AT4G35100.2"/>
    <property type="gene ID" value="AT4G35100"/>
</dbReference>
<dbReference type="GeneID" id="829662"/>
<dbReference type="Gramene" id="AT4G35100.1">
    <property type="protein sequence ID" value="AT4G35100.1"/>
    <property type="gene ID" value="AT4G35100"/>
</dbReference>
<dbReference type="Gramene" id="AT4G35100.2">
    <property type="protein sequence ID" value="AT4G35100.2"/>
    <property type="gene ID" value="AT4G35100"/>
</dbReference>
<dbReference type="KEGG" id="ath:AT4G35100"/>
<dbReference type="Araport" id="AT4G35100"/>
<dbReference type="TAIR" id="AT4G35100">
    <property type="gene designation" value="PIP3"/>
</dbReference>
<dbReference type="eggNOG" id="KOG0223">
    <property type="taxonomic scope" value="Eukaryota"/>
</dbReference>
<dbReference type="HOGENOM" id="CLU_020019_3_0_1"/>
<dbReference type="InParanoid" id="P93004"/>
<dbReference type="OMA" id="SAKANCG"/>
<dbReference type="OrthoDB" id="3222at2759"/>
<dbReference type="PhylomeDB" id="P93004"/>
<dbReference type="CD-CODE" id="4299E36E">
    <property type="entry name" value="Nucleolus"/>
</dbReference>
<dbReference type="PRO" id="PR:P93004"/>
<dbReference type="Proteomes" id="UP000006548">
    <property type="component" value="Chromosome 4"/>
</dbReference>
<dbReference type="ExpressionAtlas" id="P93004">
    <property type="expression patterns" value="baseline and differential"/>
</dbReference>
<dbReference type="GO" id="GO:0005886">
    <property type="term" value="C:plasma membrane"/>
    <property type="evidence" value="ECO:0007005"/>
    <property type="project" value="TAIR"/>
</dbReference>
<dbReference type="GO" id="GO:0009506">
    <property type="term" value="C:plasmodesma"/>
    <property type="evidence" value="ECO:0007005"/>
    <property type="project" value="TAIR"/>
</dbReference>
<dbReference type="GO" id="GO:0005773">
    <property type="term" value="C:vacuole"/>
    <property type="evidence" value="ECO:0007005"/>
    <property type="project" value="TAIR"/>
</dbReference>
<dbReference type="GO" id="GO:0003729">
    <property type="term" value="F:mRNA binding"/>
    <property type="evidence" value="ECO:0000314"/>
    <property type="project" value="TAIR"/>
</dbReference>
<dbReference type="GO" id="GO:0015250">
    <property type="term" value="F:water channel activity"/>
    <property type="evidence" value="ECO:0000314"/>
    <property type="project" value="TAIR"/>
</dbReference>
<dbReference type="CDD" id="cd00333">
    <property type="entry name" value="MIP"/>
    <property type="match status" value="1"/>
</dbReference>
<dbReference type="FunFam" id="1.20.1080.10:FF:000001">
    <property type="entry name" value="Probable aquaporin PIP1-2"/>
    <property type="match status" value="1"/>
</dbReference>
<dbReference type="Gene3D" id="1.20.1080.10">
    <property type="entry name" value="Glycerol uptake facilitator protein"/>
    <property type="match status" value="1"/>
</dbReference>
<dbReference type="InterPro" id="IPR023271">
    <property type="entry name" value="Aquaporin-like"/>
</dbReference>
<dbReference type="InterPro" id="IPR034294">
    <property type="entry name" value="Aquaporin_transptr"/>
</dbReference>
<dbReference type="InterPro" id="IPR000425">
    <property type="entry name" value="MIP"/>
</dbReference>
<dbReference type="InterPro" id="IPR022357">
    <property type="entry name" value="MIP_CS"/>
</dbReference>
<dbReference type="NCBIfam" id="TIGR00861">
    <property type="entry name" value="MIP"/>
    <property type="match status" value="1"/>
</dbReference>
<dbReference type="PANTHER" id="PTHR45687">
    <property type="entry name" value="AQUAPORIN OR AQUAGLYCEROPORIN RELATED"/>
    <property type="match status" value="1"/>
</dbReference>
<dbReference type="Pfam" id="PF00230">
    <property type="entry name" value="MIP"/>
    <property type="match status" value="1"/>
</dbReference>
<dbReference type="PRINTS" id="PR00783">
    <property type="entry name" value="MINTRINSICP"/>
</dbReference>
<dbReference type="SUPFAM" id="SSF81338">
    <property type="entry name" value="Aquaporin-like"/>
    <property type="match status" value="1"/>
</dbReference>
<dbReference type="PROSITE" id="PS00221">
    <property type="entry name" value="MIP"/>
    <property type="match status" value="1"/>
</dbReference>